<reference key="1">
    <citation type="journal article" date="2009" name="J. Microbiol.">
        <title>Overexpression of bacterioferritin comigratory protein (Bcp) enhances viability and reduced glutathione level in the fission yeast under stress.</title>
        <authorList>
            <person name="Kang G.Y."/>
            <person name="Park E.H."/>
            <person name="Kim K."/>
            <person name="Lim C.J."/>
        </authorList>
    </citation>
    <scope>NUCLEOTIDE SEQUENCE [GENOMIC DNA]</scope>
</reference>
<reference key="2">
    <citation type="journal article" date="2002" name="Nature">
        <title>The genome sequence of Schizosaccharomyces pombe.</title>
        <authorList>
            <person name="Wood V."/>
            <person name="Gwilliam R."/>
            <person name="Rajandream M.A."/>
            <person name="Lyne M.H."/>
            <person name="Lyne R."/>
            <person name="Stewart A."/>
            <person name="Sgouros J.G."/>
            <person name="Peat N."/>
            <person name="Hayles J."/>
            <person name="Baker S.G."/>
            <person name="Basham D."/>
            <person name="Bowman S."/>
            <person name="Brooks K."/>
            <person name="Brown D."/>
            <person name="Brown S."/>
            <person name="Chillingworth T."/>
            <person name="Churcher C.M."/>
            <person name="Collins M."/>
            <person name="Connor R."/>
            <person name="Cronin A."/>
            <person name="Davis P."/>
            <person name="Feltwell T."/>
            <person name="Fraser A."/>
            <person name="Gentles S."/>
            <person name="Goble A."/>
            <person name="Hamlin N."/>
            <person name="Harris D.E."/>
            <person name="Hidalgo J."/>
            <person name="Hodgson G."/>
            <person name="Holroyd S."/>
            <person name="Hornsby T."/>
            <person name="Howarth S."/>
            <person name="Huckle E.J."/>
            <person name="Hunt S."/>
            <person name="Jagels K."/>
            <person name="James K.D."/>
            <person name="Jones L."/>
            <person name="Jones M."/>
            <person name="Leather S."/>
            <person name="McDonald S."/>
            <person name="McLean J."/>
            <person name="Mooney P."/>
            <person name="Moule S."/>
            <person name="Mungall K.L."/>
            <person name="Murphy L.D."/>
            <person name="Niblett D."/>
            <person name="Odell C."/>
            <person name="Oliver K."/>
            <person name="O'Neil S."/>
            <person name="Pearson D."/>
            <person name="Quail M.A."/>
            <person name="Rabbinowitsch E."/>
            <person name="Rutherford K.M."/>
            <person name="Rutter S."/>
            <person name="Saunders D."/>
            <person name="Seeger K."/>
            <person name="Sharp S."/>
            <person name="Skelton J."/>
            <person name="Simmonds M.N."/>
            <person name="Squares R."/>
            <person name="Squares S."/>
            <person name="Stevens K."/>
            <person name="Taylor K."/>
            <person name="Taylor R.G."/>
            <person name="Tivey A."/>
            <person name="Walsh S.V."/>
            <person name="Warren T."/>
            <person name="Whitehead S."/>
            <person name="Woodward J.R."/>
            <person name="Volckaert G."/>
            <person name="Aert R."/>
            <person name="Robben J."/>
            <person name="Grymonprez B."/>
            <person name="Weltjens I."/>
            <person name="Vanstreels E."/>
            <person name="Rieger M."/>
            <person name="Schaefer M."/>
            <person name="Mueller-Auer S."/>
            <person name="Gabel C."/>
            <person name="Fuchs M."/>
            <person name="Duesterhoeft A."/>
            <person name="Fritzc C."/>
            <person name="Holzer E."/>
            <person name="Moestl D."/>
            <person name="Hilbert H."/>
            <person name="Borzym K."/>
            <person name="Langer I."/>
            <person name="Beck A."/>
            <person name="Lehrach H."/>
            <person name="Reinhardt R."/>
            <person name="Pohl T.M."/>
            <person name="Eger P."/>
            <person name="Zimmermann W."/>
            <person name="Wedler H."/>
            <person name="Wambutt R."/>
            <person name="Purnelle B."/>
            <person name="Goffeau A."/>
            <person name="Cadieu E."/>
            <person name="Dreano S."/>
            <person name="Gloux S."/>
            <person name="Lelaure V."/>
            <person name="Mottier S."/>
            <person name="Galibert F."/>
            <person name="Aves S.J."/>
            <person name="Xiang Z."/>
            <person name="Hunt C."/>
            <person name="Moore K."/>
            <person name="Hurst S.M."/>
            <person name="Lucas M."/>
            <person name="Rochet M."/>
            <person name="Gaillardin C."/>
            <person name="Tallada V.A."/>
            <person name="Garzon A."/>
            <person name="Thode G."/>
            <person name="Daga R.R."/>
            <person name="Cruzado L."/>
            <person name="Jimenez J."/>
            <person name="Sanchez M."/>
            <person name="del Rey F."/>
            <person name="Benito J."/>
            <person name="Dominguez A."/>
            <person name="Revuelta J.L."/>
            <person name="Moreno S."/>
            <person name="Armstrong J."/>
            <person name="Forsburg S.L."/>
            <person name="Cerutti L."/>
            <person name="Lowe T."/>
            <person name="McCombie W.R."/>
            <person name="Paulsen I."/>
            <person name="Potashkin J."/>
            <person name="Shpakovski G.V."/>
            <person name="Ussery D."/>
            <person name="Barrell B.G."/>
            <person name="Nurse P."/>
        </authorList>
    </citation>
    <scope>NUCLEOTIDE SEQUENCE [LARGE SCALE GENOMIC DNA]</scope>
    <source>
        <strain>972 / ATCC 24843</strain>
    </source>
</reference>
<reference key="3">
    <citation type="journal article" date="2006" name="Nat. Biotechnol.">
        <title>ORFeome cloning and global analysis of protein localization in the fission yeast Schizosaccharomyces pombe.</title>
        <authorList>
            <person name="Matsuyama A."/>
            <person name="Arai R."/>
            <person name="Yashiroda Y."/>
            <person name="Shirai A."/>
            <person name="Kamata A."/>
            <person name="Sekido S."/>
            <person name="Kobayashi Y."/>
            <person name="Hashimoto A."/>
            <person name="Hamamoto M."/>
            <person name="Hiraoka Y."/>
            <person name="Horinouchi S."/>
            <person name="Yoshida M."/>
        </authorList>
    </citation>
    <scope>SUBCELLULAR LOCATION [LARGE SCALE ANALYSIS]</scope>
</reference>
<reference key="4">
    <citation type="journal article" date="2010" name="BMB Rep.">
        <title>Distinct functional roles of peroxiredoxin isozymes and glutathione peroxidase from fission yeast, Schizosaccharomyces pombe.</title>
        <authorList>
            <person name="Kim J.S."/>
            <person name="Bang M.A."/>
            <person name="Lee S."/>
            <person name="Chae H.Z."/>
            <person name="Kim K."/>
        </authorList>
    </citation>
    <scope>FUNCTION</scope>
    <scope>SUBUNIT</scope>
</reference>
<keyword id="KW-0049">Antioxidant</keyword>
<keyword id="KW-0963">Cytoplasm</keyword>
<keyword id="KW-1015">Disulfide bond</keyword>
<keyword id="KW-0539">Nucleus</keyword>
<keyword id="KW-0560">Oxidoreductase</keyword>
<keyword id="KW-0575">Peroxidase</keyword>
<keyword id="KW-0676">Redox-active center</keyword>
<keyword id="KW-1185">Reference proteome</keyword>
<protein>
    <recommendedName>
        <fullName>Peroxiredoxin bcp1</fullName>
        <shortName>Prx</shortName>
        <ecNumber evidence="1">1.11.1.24</ecNumber>
    </recommendedName>
    <alternativeName>
        <fullName>Bacterioferritin comigratory protein 1</fullName>
        <shortName>BCP</shortName>
    </alternativeName>
    <alternativeName>
        <fullName>Nuclear thiol peroxidase</fullName>
        <shortName>nTPx</shortName>
    </alternativeName>
    <alternativeName>
        <fullName>Thioredoxin peroxidase</fullName>
    </alternativeName>
    <alternativeName>
        <fullName evidence="5">Thioredoxin-dependent peroxiredoxin bcp1</fullName>
    </alternativeName>
</protein>
<proteinExistence type="evidence at protein level"/>
<accession>O94561</accession>
<accession>A9QUS1</accession>
<evidence type="ECO:0000250" key="1">
    <source>
        <dbReference type="UniProtKB" id="P40553"/>
    </source>
</evidence>
<evidence type="ECO:0000255" key="2">
    <source>
        <dbReference type="PROSITE-ProRule" id="PRU00691"/>
    </source>
</evidence>
<evidence type="ECO:0000269" key="3">
    <source>
    </source>
</evidence>
<evidence type="ECO:0000269" key="4">
    <source>
    </source>
</evidence>
<evidence type="ECO:0000305" key="5"/>
<sequence length="195" mass="21164">MDAPRRSSRLAAKIANVLDSKGTIIPEAAPVMLKKPAKDESVDSTIQVGDVIPDITLPDEDGTSIRLRDITANKGLVIFAYPKASTPGCTKQGCGFRDNYPKIQASDYEVLGLSFDTSKAQKAFKDKQNFPYHLLSDPKGELIKKLGAEKPGGGKLFRSHWIFEKGTGKCIVKEIDISPLVSVDKAFAVITDSEP</sequence>
<comment type="function">
    <text evidence="1 4">Thiol-specific peroxidase that catalyzes the reduction of hydrogen peroxide and organic hydroperoxides to water and alcohols, respectively. Plays a role in cell protection against oxidative stress by detoxifying peroxides and as sensor of hydrogen peroxide-mediated signaling events (By similarity). Acts as a scavenger of H(2)O(2) (PubMed:20356456).</text>
</comment>
<comment type="catalytic activity">
    <reaction evidence="1">
        <text>a hydroperoxide + [thioredoxin]-dithiol = an alcohol + [thioredoxin]-disulfide + H2O</text>
        <dbReference type="Rhea" id="RHEA:62620"/>
        <dbReference type="Rhea" id="RHEA-COMP:10698"/>
        <dbReference type="Rhea" id="RHEA-COMP:10700"/>
        <dbReference type="ChEBI" id="CHEBI:15377"/>
        <dbReference type="ChEBI" id="CHEBI:29950"/>
        <dbReference type="ChEBI" id="CHEBI:30879"/>
        <dbReference type="ChEBI" id="CHEBI:35924"/>
        <dbReference type="ChEBI" id="CHEBI:50058"/>
        <dbReference type="EC" id="1.11.1.24"/>
    </reaction>
</comment>
<comment type="subunit">
    <text evidence="4">Monomer.</text>
</comment>
<comment type="subcellular location">
    <subcellularLocation>
        <location evidence="3">Cytoplasm</location>
    </subcellularLocation>
    <subcellularLocation>
        <location evidence="3">Nucleus</location>
    </subcellularLocation>
</comment>
<comment type="PTM">
    <text evidence="1">The active site is a conserved redox-active cysteine residue, the peroxidatic cysteine (C(P)), which makes the nucleophilic attack on the peroxide substrate. The peroxide oxidizes the C(P)-SH to cysteine sulfenic acid (C(P)-SOH), which then reacts with another cysteine residue, the resolving cysteine (C(R)), to form a disulfide bridge. The disulfide is subsequently reduced by an appropriate electron donor to complete the catalytic cycle. In this atypical 2-Cys peroxiredoxin, C(R) is present in the same subunit to form an intramolecular disulfide. The disulfide is subsequently reduced by thioredoxin.</text>
</comment>
<comment type="similarity">
    <text evidence="5">Belongs to the peroxiredoxin family. BCP/PrxQ subfamily.</text>
</comment>
<gene>
    <name type="primary">bcp1</name>
    <name type="ORF">SPBC1773.02c</name>
</gene>
<organism>
    <name type="scientific">Schizosaccharomyces pombe (strain 972 / ATCC 24843)</name>
    <name type="common">Fission yeast</name>
    <dbReference type="NCBI Taxonomy" id="284812"/>
    <lineage>
        <taxon>Eukaryota</taxon>
        <taxon>Fungi</taxon>
        <taxon>Dikarya</taxon>
        <taxon>Ascomycota</taxon>
        <taxon>Taphrinomycotina</taxon>
        <taxon>Schizosaccharomycetes</taxon>
        <taxon>Schizosaccharomycetales</taxon>
        <taxon>Schizosaccharomycetaceae</taxon>
        <taxon>Schizosaccharomyces</taxon>
    </lineage>
</organism>
<dbReference type="EC" id="1.11.1.24" evidence="1"/>
<dbReference type="EMBL" id="EU266495">
    <property type="protein sequence ID" value="ABX64442.1"/>
    <property type="molecule type" value="Genomic_DNA"/>
</dbReference>
<dbReference type="EMBL" id="CU329671">
    <property type="protein sequence ID" value="CAA21907.1"/>
    <property type="molecule type" value="Genomic_DNA"/>
</dbReference>
<dbReference type="PIR" id="T39667">
    <property type="entry name" value="T39667"/>
</dbReference>
<dbReference type="RefSeq" id="NP_595117.1">
    <property type="nucleotide sequence ID" value="NM_001021024.2"/>
</dbReference>
<dbReference type="SMR" id="O94561"/>
<dbReference type="BioGRID" id="276173">
    <property type="interactions" value="17"/>
</dbReference>
<dbReference type="FunCoup" id="O94561">
    <property type="interactions" value="318"/>
</dbReference>
<dbReference type="STRING" id="284812.O94561"/>
<dbReference type="PeroxiBase" id="4315">
    <property type="entry name" value="SpomBCP"/>
</dbReference>
<dbReference type="iPTMnet" id="O94561"/>
<dbReference type="PaxDb" id="4896-SPBC1773.02c.1"/>
<dbReference type="EnsemblFungi" id="SPBC1773.02c.1">
    <property type="protein sequence ID" value="SPBC1773.02c.1:pep"/>
    <property type="gene ID" value="SPBC1773.02c"/>
</dbReference>
<dbReference type="GeneID" id="2539615"/>
<dbReference type="KEGG" id="spo:2539615"/>
<dbReference type="PomBase" id="SPBC1773.02c">
    <property type="gene designation" value="bcp1"/>
</dbReference>
<dbReference type="VEuPathDB" id="FungiDB:SPBC1773.02c"/>
<dbReference type="eggNOG" id="KOG0855">
    <property type="taxonomic scope" value="Eukaryota"/>
</dbReference>
<dbReference type="HOGENOM" id="CLU_042529_2_2_1"/>
<dbReference type="InParanoid" id="O94561"/>
<dbReference type="OMA" id="CGFRDNF"/>
<dbReference type="PhylomeDB" id="O94561"/>
<dbReference type="PRO" id="PR:O94561"/>
<dbReference type="Proteomes" id="UP000002485">
    <property type="component" value="Chromosome II"/>
</dbReference>
<dbReference type="GO" id="GO:0005737">
    <property type="term" value="C:cytoplasm"/>
    <property type="evidence" value="ECO:0000318"/>
    <property type="project" value="GO_Central"/>
</dbReference>
<dbReference type="GO" id="GO:0005829">
    <property type="term" value="C:cytosol"/>
    <property type="evidence" value="ECO:0007005"/>
    <property type="project" value="PomBase"/>
</dbReference>
<dbReference type="GO" id="GO:0005634">
    <property type="term" value="C:nucleus"/>
    <property type="evidence" value="ECO:0007005"/>
    <property type="project" value="PomBase"/>
</dbReference>
<dbReference type="GO" id="GO:0008379">
    <property type="term" value="F:thioredoxin peroxidase activity"/>
    <property type="evidence" value="ECO:0000314"/>
    <property type="project" value="PomBase"/>
</dbReference>
<dbReference type="GO" id="GO:0045454">
    <property type="term" value="P:cell redox homeostasis"/>
    <property type="evidence" value="ECO:0000318"/>
    <property type="project" value="GO_Central"/>
</dbReference>
<dbReference type="GO" id="GO:0061692">
    <property type="term" value="P:cellular detoxification of hydrogen peroxide"/>
    <property type="evidence" value="ECO:0000305"/>
    <property type="project" value="PomBase"/>
</dbReference>
<dbReference type="GO" id="GO:0034599">
    <property type="term" value="P:cellular response to oxidative stress"/>
    <property type="evidence" value="ECO:0000318"/>
    <property type="project" value="GO_Central"/>
</dbReference>
<dbReference type="GO" id="GO:0042744">
    <property type="term" value="P:hydrogen peroxide catabolic process"/>
    <property type="evidence" value="ECO:0000305"/>
    <property type="project" value="PomBase"/>
</dbReference>
<dbReference type="CDD" id="cd03017">
    <property type="entry name" value="PRX_BCP"/>
    <property type="match status" value="1"/>
</dbReference>
<dbReference type="FunFam" id="3.40.30.10:FF:000157">
    <property type="entry name" value="DOT5p Nuclear thiol peroxidase"/>
    <property type="match status" value="1"/>
</dbReference>
<dbReference type="Gene3D" id="3.40.30.10">
    <property type="entry name" value="Glutaredoxin"/>
    <property type="match status" value="1"/>
</dbReference>
<dbReference type="InterPro" id="IPR000866">
    <property type="entry name" value="AhpC/TSA"/>
</dbReference>
<dbReference type="InterPro" id="IPR050924">
    <property type="entry name" value="Peroxiredoxin_BCP/PrxQ"/>
</dbReference>
<dbReference type="InterPro" id="IPR036249">
    <property type="entry name" value="Thioredoxin-like_sf"/>
</dbReference>
<dbReference type="InterPro" id="IPR013766">
    <property type="entry name" value="Thioredoxin_domain"/>
</dbReference>
<dbReference type="PANTHER" id="PTHR42801:SF23">
    <property type="entry name" value="PEROXIREDOXIN DOT5"/>
    <property type="match status" value="1"/>
</dbReference>
<dbReference type="PANTHER" id="PTHR42801">
    <property type="entry name" value="THIOREDOXIN-DEPENDENT PEROXIDE REDUCTASE"/>
    <property type="match status" value="1"/>
</dbReference>
<dbReference type="Pfam" id="PF00578">
    <property type="entry name" value="AhpC-TSA"/>
    <property type="match status" value="1"/>
</dbReference>
<dbReference type="SUPFAM" id="SSF52833">
    <property type="entry name" value="Thioredoxin-like"/>
    <property type="match status" value="1"/>
</dbReference>
<dbReference type="PROSITE" id="PS51352">
    <property type="entry name" value="THIOREDOXIN_2"/>
    <property type="match status" value="1"/>
</dbReference>
<name>PRX_SCHPO</name>
<feature type="chain" id="PRO_0000314635" description="Peroxiredoxin bcp1">
    <location>
        <begin position="1"/>
        <end position="195"/>
    </location>
</feature>
<feature type="domain" description="Thioredoxin" evidence="2">
    <location>
        <begin position="46"/>
        <end position="168"/>
    </location>
</feature>
<feature type="active site" description="Cysteine sulfenic acid (-SOH) intermediate" evidence="1">
    <location>
        <position position="89"/>
    </location>
</feature>
<feature type="disulfide bond" description="Redox-active" evidence="1">
    <location>
        <begin position="89"/>
        <end position="94"/>
    </location>
</feature>